<feature type="chain" id="PRO_0000385318" description="SOSS complex subunit C homolog">
    <location>
        <begin position="1"/>
        <end position="114"/>
    </location>
</feature>
<feature type="region of interest" description="Disordered" evidence="1">
    <location>
        <begin position="1"/>
        <end position="61"/>
    </location>
</feature>
<feature type="compositionally biased region" description="Polar residues" evidence="1">
    <location>
        <begin position="1"/>
        <end position="10"/>
    </location>
</feature>
<organism>
    <name type="scientific">Nematostella vectensis</name>
    <name type="common">Starlet sea anemone</name>
    <dbReference type="NCBI Taxonomy" id="45351"/>
    <lineage>
        <taxon>Eukaryota</taxon>
        <taxon>Metazoa</taxon>
        <taxon>Cnidaria</taxon>
        <taxon>Anthozoa</taxon>
        <taxon>Hexacorallia</taxon>
        <taxon>Actiniaria</taxon>
        <taxon>Edwardsiidae</taxon>
        <taxon>Nematostella</taxon>
    </lineage>
</organism>
<keyword id="KW-1185">Reference proteome</keyword>
<evidence type="ECO:0000256" key="1">
    <source>
        <dbReference type="SAM" id="MobiDB-lite"/>
    </source>
</evidence>
<evidence type="ECO:0000305" key="2"/>
<comment type="similarity">
    <text evidence="2">Belongs to the SOSS-C family.</text>
</comment>
<reference key="1">
    <citation type="journal article" date="2007" name="Science">
        <title>Sea anemone genome reveals ancestral eumetazoan gene repertoire and genomic organization.</title>
        <authorList>
            <person name="Putnam N.H."/>
            <person name="Srivastava M."/>
            <person name="Hellsten U."/>
            <person name="Dirks B."/>
            <person name="Chapman J."/>
            <person name="Salamov A."/>
            <person name="Terry A."/>
            <person name="Shapiro H."/>
            <person name="Lindquist E."/>
            <person name="Kapitonov V.V."/>
            <person name="Jurka J."/>
            <person name="Genikhovich G."/>
            <person name="Grigoriev I.V."/>
            <person name="Lucas S.M."/>
            <person name="Steele R.E."/>
            <person name="Finnerty J.R."/>
            <person name="Technau U."/>
            <person name="Martindale M.Q."/>
            <person name="Rokhsar D.S."/>
        </authorList>
    </citation>
    <scope>NUCLEOTIDE SEQUENCE [LARGE SCALE GENOMIC DNA]</scope>
    <source>
        <strain>CH2 X CH6</strain>
    </source>
</reference>
<proteinExistence type="inferred from homology"/>
<protein>
    <recommendedName>
        <fullName>SOSS complex subunit C homolog</fullName>
    </recommendedName>
</protein>
<name>SOSSC_NEMVE</name>
<sequence>MAFQQHGNQEVRNRKILQGLEEKKRQMMNQQQGGGAGPLPGPSHVARPPTDAGNTSASRIHEPIVRYPNQTHQLAISQRQALEHAHSVSPGFYITQDSMYGNLILPVIPRVESE</sequence>
<dbReference type="EMBL" id="DS469536">
    <property type="protein sequence ID" value="EDO45349.1"/>
    <property type="molecule type" value="Genomic_DNA"/>
</dbReference>
<dbReference type="RefSeq" id="XP_001637412.1">
    <property type="nucleotide sequence ID" value="XM_001637362.1"/>
</dbReference>
<dbReference type="SMR" id="A7RTB3"/>
<dbReference type="STRING" id="45351.A7RTB3"/>
<dbReference type="EnsemblMetazoa" id="EDO45349">
    <property type="protein sequence ID" value="EDO45349"/>
    <property type="gene ID" value="NEMVEDRAFT_v1g201834"/>
</dbReference>
<dbReference type="KEGG" id="nve:5517410"/>
<dbReference type="eggNOG" id="ENOG502S23S">
    <property type="taxonomic scope" value="Eukaryota"/>
</dbReference>
<dbReference type="HOGENOM" id="CLU_145773_0_0_1"/>
<dbReference type="InParanoid" id="A7RTB3"/>
<dbReference type="OMA" id="VMETQHM"/>
<dbReference type="PhylomeDB" id="A7RTB3"/>
<dbReference type="Proteomes" id="UP000001593">
    <property type="component" value="Unassembled WGS sequence"/>
</dbReference>
<dbReference type="GO" id="GO:0005654">
    <property type="term" value="C:nucleoplasm"/>
    <property type="evidence" value="ECO:0000318"/>
    <property type="project" value="GO_Central"/>
</dbReference>
<dbReference type="GO" id="GO:0070876">
    <property type="term" value="C:SOSS complex"/>
    <property type="evidence" value="ECO:0000318"/>
    <property type="project" value="GO_Central"/>
</dbReference>
<dbReference type="GO" id="GO:0006281">
    <property type="term" value="P:DNA repair"/>
    <property type="evidence" value="ECO:0000318"/>
    <property type="project" value="GO_Central"/>
</dbReference>
<dbReference type="InterPro" id="IPR031821">
    <property type="entry name" value="SOSSC"/>
</dbReference>
<dbReference type="PANTHER" id="PTHR31526">
    <property type="entry name" value="SOSS COMPLEX SUBUNIT C"/>
    <property type="match status" value="1"/>
</dbReference>
<dbReference type="PANTHER" id="PTHR31526:SF2">
    <property type="entry name" value="SOSS COMPLEX SUBUNIT C"/>
    <property type="match status" value="1"/>
</dbReference>
<dbReference type="Pfam" id="PF15925">
    <property type="entry name" value="SOSSC"/>
    <property type="match status" value="1"/>
</dbReference>
<accession>A7RTB3</accession>
<gene>
    <name type="ORF">v1g201834</name>
</gene>